<proteinExistence type="evidence at protein level"/>
<feature type="chain" id="PRO_0000248389" description="Ephexin-1">
    <location>
        <begin position="1"/>
        <end position="710"/>
    </location>
</feature>
<feature type="domain" description="DH" evidence="3">
    <location>
        <begin position="273"/>
        <end position="457"/>
    </location>
</feature>
<feature type="domain" description="PH" evidence="4">
    <location>
        <begin position="489"/>
        <end position="601"/>
    </location>
</feature>
<feature type="domain" description="SH3" evidence="5">
    <location>
        <begin position="612"/>
        <end position="673"/>
    </location>
</feature>
<feature type="region of interest" description="Regulatory region; modulates activity toward RHOA, RAC1 and CDC42">
    <location>
        <begin position="1"/>
        <end position="272"/>
    </location>
</feature>
<feature type="region of interest" description="Disordered" evidence="6">
    <location>
        <begin position="1"/>
        <end position="146"/>
    </location>
</feature>
<feature type="region of interest" description="Disordered" evidence="6">
    <location>
        <begin position="192"/>
        <end position="234"/>
    </location>
</feature>
<feature type="region of interest" description="Disordered" evidence="6">
    <location>
        <begin position="688"/>
        <end position="710"/>
    </location>
</feature>
<feature type="compositionally biased region" description="Basic and acidic residues" evidence="6">
    <location>
        <begin position="1"/>
        <end position="20"/>
    </location>
</feature>
<feature type="compositionally biased region" description="Polar residues" evidence="6">
    <location>
        <begin position="123"/>
        <end position="137"/>
    </location>
</feature>
<feature type="compositionally biased region" description="Acidic residues" evidence="6">
    <location>
        <begin position="211"/>
        <end position="227"/>
    </location>
</feature>
<feature type="compositionally biased region" description="Basic and acidic residues" evidence="6">
    <location>
        <begin position="688"/>
        <end position="699"/>
    </location>
</feature>
<feature type="compositionally biased region" description="Basic residues" evidence="6">
    <location>
        <begin position="700"/>
        <end position="710"/>
    </location>
</feature>
<feature type="modified residue" description="Phosphotyrosine" evidence="2">
    <location>
        <position position="177"/>
    </location>
</feature>
<feature type="splice variant" id="VSP_020262" description="In isoform 2." evidence="13 14">
    <location>
        <begin position="1"/>
        <end position="90"/>
    </location>
</feature>
<feature type="splice variant" id="VSP_020263" description="In isoform 2." evidence="13 14">
    <original>KMGKSVNERSAFNLPQGRLSPWRTPAQRDTGAQEA</original>
    <variation>MELLAAAFSAACAVDHDSSTSESDTRDSAAGHLPG</variation>
    <location>
        <begin position="91"/>
        <end position="125"/>
    </location>
</feature>
<feature type="mutagenesis site" description="Loss of ephrin-mediated growth cone collapse. No effect on interaction with EPHA4." evidence="11">
    <original>Y</original>
    <variation>F</variation>
    <location>
        <position position="177"/>
    </location>
</feature>
<feature type="sequence conflict" description="In Ref. 2; AAK71494." evidence="15" ref="2">
    <original>R</original>
    <variation>W</variation>
    <location>
        <position position="530"/>
    </location>
</feature>
<organism>
    <name type="scientific">Mus musculus</name>
    <name type="common">Mouse</name>
    <dbReference type="NCBI Taxonomy" id="10090"/>
    <lineage>
        <taxon>Eukaryota</taxon>
        <taxon>Metazoa</taxon>
        <taxon>Chordata</taxon>
        <taxon>Craniata</taxon>
        <taxon>Vertebrata</taxon>
        <taxon>Euteleostomi</taxon>
        <taxon>Mammalia</taxon>
        <taxon>Eutheria</taxon>
        <taxon>Euarchontoglires</taxon>
        <taxon>Glires</taxon>
        <taxon>Rodentia</taxon>
        <taxon>Myomorpha</taxon>
        <taxon>Muroidea</taxon>
        <taxon>Muridae</taxon>
        <taxon>Murinae</taxon>
        <taxon>Mus</taxon>
        <taxon>Mus</taxon>
    </lineage>
</organism>
<reference key="1">
    <citation type="journal article" date="2000" name="Genomics">
        <title>Characterization of Ngef, a novel member of the Dbl family of genes expressed predominantly in the caudate nucleus.</title>
        <authorList>
            <person name="Rodrigues N.R."/>
            <person name="Theodosiou A.M."/>
            <person name="Nesbit M.A."/>
            <person name="Campbell L."/>
            <person name="Tandle A.T."/>
            <person name="Saranath D."/>
            <person name="Davies K.E."/>
        </authorList>
    </citation>
    <scope>NUCLEOTIDE SEQUENCE [MRNA] (ISOFORM 2)</scope>
    <scope>TISSUE SPECIFICITY</scope>
    <scope>DEVELOPMENTAL STAGE</scope>
    <source>
        <tissue>Brain</tissue>
    </source>
</reference>
<reference key="2">
    <citation type="journal article" date="2001" name="Cell">
        <title>EphA receptors regulate growth cone dynamics through the novel guanine nucleotide exchange factor ephexin.</title>
        <authorList>
            <person name="Shamah S.M."/>
            <person name="Lin M.Z."/>
            <person name="Goldberg J.L."/>
            <person name="Estrach S."/>
            <person name="Sahin M."/>
            <person name="Hu L."/>
            <person name="Bazalakova M."/>
            <person name="Neve R.L."/>
            <person name="Corfas G."/>
            <person name="Debant A."/>
            <person name="Greenberg M.E."/>
        </authorList>
    </citation>
    <scope>NUCLEOTIDE SEQUENCE [MRNA] (ISOFORM 2)</scope>
    <scope>FUNCTION</scope>
    <scope>INTERACTION WITH EPHA4</scope>
    <source>
        <strain>C57BL/6J</strain>
    </source>
</reference>
<reference key="3">
    <citation type="journal article" date="2004" name="Genome Res.">
        <title>The status, quality, and expansion of the NIH full-length cDNA project: the Mammalian Gene Collection (MGC).</title>
        <authorList>
            <consortium name="The MGC Project Team"/>
        </authorList>
    </citation>
    <scope>NUCLEOTIDE SEQUENCE [LARGE SCALE MRNA] (ISOFORM 1)</scope>
    <source>
        <strain>FVB/N</strain>
        <tissue>Kidney</tissue>
    </source>
</reference>
<reference key="4">
    <citation type="journal article" date="2004" name="Cereb. Cortex">
        <title>Gene expression analysis of the late embryonic mouse cerebral cortex using DNA microarray: identification of several region- and layer-specific genes.</title>
        <authorList>
            <person name="Funatsu N."/>
            <person name="Inoue T."/>
            <person name="Nakamura S."/>
        </authorList>
    </citation>
    <scope>DEVELOPMENTAL STAGE</scope>
</reference>
<reference key="5">
    <citation type="journal article" date="2004" name="J. Neurosci.">
        <title>Src family kinases are involved in EphA receptor-mediated retinal axon guidance.</title>
        <authorList>
            <person name="Knoell B."/>
            <person name="Drescher U."/>
        </authorList>
    </citation>
    <scope>PHOSPHORYLATION BY SRC FAMILY KINASES</scope>
</reference>
<reference key="6">
    <citation type="journal article" date="2005" name="Neuron">
        <title>Eph-dependent tyrosine phosphorylation of ephexin1 modulates growth cone collapse.</title>
        <authorList>
            <person name="Sahin M."/>
            <person name="Greer P.L."/>
            <person name="Lin M.Z."/>
            <person name="Poucher H."/>
            <person name="Eberhart J."/>
            <person name="Schmidt S."/>
            <person name="Wright T.M."/>
            <person name="Shamah S.M."/>
            <person name="O'connell S."/>
            <person name="Cowan C.W."/>
            <person name="Hu L."/>
            <person name="Goldberg J.L."/>
            <person name="Debant A."/>
            <person name="Corfas G."/>
            <person name="Krull C.E."/>
            <person name="Greenberg M.E."/>
        </authorList>
    </citation>
    <scope>FUNCTION</scope>
    <scope>MUTAGENESIS OF TYR-177</scope>
</reference>
<reference key="7">
    <citation type="journal article" date="2007" name="Nat. Neurosci.">
        <title>Cdk5 regulates EphA4-mediated dendritic spine retraction through an ephexin1-dependent mechanism.</title>
        <authorList>
            <person name="Fu W.Y."/>
            <person name="Chen Y."/>
            <person name="Sahin M."/>
            <person name="Zhao X.S."/>
            <person name="Shi L."/>
            <person name="Bikoff J.B."/>
            <person name="Lai K.O."/>
            <person name="Yung W.H."/>
            <person name="Fu A.K."/>
            <person name="Greenberg M.E."/>
            <person name="Ip N.Y."/>
        </authorList>
    </citation>
    <scope>FUNCTION IN DENDRITIC SPINE MORPHOGENESIS</scope>
    <scope>INTERACTION WITH EPHA4 AND CDK5R1</scope>
    <scope>PHOSPHORYLATION BY CDK5</scope>
</reference>
<reference key="8">
    <citation type="journal article" date="2010" name="Cell">
        <title>A tissue-specific atlas of mouse protein phosphorylation and expression.</title>
        <authorList>
            <person name="Huttlin E.L."/>
            <person name="Jedrychowski M.P."/>
            <person name="Elias J.E."/>
            <person name="Goswami T."/>
            <person name="Rad R."/>
            <person name="Beausoleil S.A."/>
            <person name="Villen J."/>
            <person name="Haas W."/>
            <person name="Sowa M.E."/>
            <person name="Gygi S.P."/>
        </authorList>
    </citation>
    <scope>IDENTIFICATION BY MASS SPECTROMETRY [LARGE SCALE ANALYSIS]</scope>
    <source>
        <tissue>Brain</tissue>
        <tissue>Liver</tissue>
    </source>
</reference>
<protein>
    <recommendedName>
        <fullName>Ephexin-1</fullName>
    </recommendedName>
    <alternativeName>
        <fullName>Eph-interacting exchange protein</fullName>
    </alternativeName>
    <alternativeName>
        <fullName>Neuronal guanine nucleotide exchange factor</fullName>
    </alternativeName>
</protein>
<gene>
    <name type="primary">Ngef</name>
</gene>
<accession>Q8CHT1</accession>
<accession>Q8R204</accession>
<accession>Q923H2</accession>
<accession>Q9JHT9</accession>
<keyword id="KW-0025">Alternative splicing</keyword>
<keyword id="KW-0966">Cell projection</keyword>
<keyword id="KW-0963">Cytoplasm</keyword>
<keyword id="KW-0217">Developmental protein</keyword>
<keyword id="KW-0221">Differentiation</keyword>
<keyword id="KW-0344">Guanine-nucleotide releasing factor</keyword>
<keyword id="KW-0472">Membrane</keyword>
<keyword id="KW-0524">Neurogenesis</keyword>
<keyword id="KW-0597">Phosphoprotein</keyword>
<keyword id="KW-1185">Reference proteome</keyword>
<keyword id="KW-0728">SH3 domain</keyword>
<dbReference type="EMBL" id="AJ238898">
    <property type="protein sequence ID" value="CAC00698.1"/>
    <property type="status" value="ALT_FRAME"/>
    <property type="molecule type" value="mRNA"/>
</dbReference>
<dbReference type="EMBL" id="AY038025">
    <property type="protein sequence ID" value="AAK71494.1"/>
    <property type="molecule type" value="mRNA"/>
</dbReference>
<dbReference type="EMBL" id="BC022680">
    <property type="protein sequence ID" value="AAH22680.1"/>
    <property type="status" value="ALT_INIT"/>
    <property type="molecule type" value="mRNA"/>
</dbReference>
<dbReference type="EMBL" id="BC039279">
    <property type="protein sequence ID" value="AAH39279.1"/>
    <property type="molecule type" value="mRNA"/>
</dbReference>
<dbReference type="CCDS" id="CCDS48306.1">
    <molecule id="Q8CHT1-2"/>
</dbReference>
<dbReference type="CCDS" id="CCDS48307.1">
    <molecule id="Q8CHT1-1"/>
</dbReference>
<dbReference type="RefSeq" id="NP_001104784.1">
    <property type="nucleotide sequence ID" value="NM_001111314.1"/>
</dbReference>
<dbReference type="RefSeq" id="NP_063920.2">
    <molecule id="Q8CHT1-2"/>
    <property type="nucleotide sequence ID" value="NM_019867.2"/>
</dbReference>
<dbReference type="SMR" id="Q8CHT1"/>
<dbReference type="BioGRID" id="207543">
    <property type="interactions" value="14"/>
</dbReference>
<dbReference type="FunCoup" id="Q8CHT1">
    <property type="interactions" value="123"/>
</dbReference>
<dbReference type="IntAct" id="Q8CHT1">
    <property type="interactions" value="6"/>
</dbReference>
<dbReference type="MINT" id="Q8CHT1"/>
<dbReference type="STRING" id="10090.ENSMUSP00000066894"/>
<dbReference type="GlyGen" id="Q8CHT1">
    <property type="glycosylation" value="2 sites, 1 O-linked glycan (1 site)"/>
</dbReference>
<dbReference type="iPTMnet" id="Q8CHT1"/>
<dbReference type="PhosphoSitePlus" id="Q8CHT1"/>
<dbReference type="SwissPalm" id="Q8CHT1"/>
<dbReference type="PaxDb" id="10090-ENSMUSP00000066894"/>
<dbReference type="ProteomicsDB" id="252961">
    <molecule id="Q8CHT1-1"/>
</dbReference>
<dbReference type="ProteomicsDB" id="252962">
    <molecule id="Q8CHT1-2"/>
</dbReference>
<dbReference type="Antibodypedia" id="2119">
    <property type="antibodies" value="132 antibodies from 21 providers"/>
</dbReference>
<dbReference type="Ensembl" id="ENSMUST00000027477.15">
    <molecule id="Q8CHT1-2"/>
    <property type="protein sequence ID" value="ENSMUSP00000027477.9"/>
    <property type="gene ID" value="ENSMUSG00000026259.15"/>
</dbReference>
<dbReference type="GeneID" id="53972"/>
<dbReference type="KEGG" id="mmu:53972"/>
<dbReference type="UCSC" id="uc007bwx.2">
    <molecule id="Q8CHT1-2"/>
    <property type="organism name" value="mouse"/>
</dbReference>
<dbReference type="AGR" id="MGI:1858414"/>
<dbReference type="CTD" id="25791"/>
<dbReference type="MGI" id="MGI:1858414">
    <property type="gene designation" value="Ngef"/>
</dbReference>
<dbReference type="VEuPathDB" id="HostDB:ENSMUSG00000026259"/>
<dbReference type="eggNOG" id="KOG3523">
    <property type="taxonomic scope" value="Eukaryota"/>
</dbReference>
<dbReference type="GeneTree" id="ENSGT01030000234571"/>
<dbReference type="HOGENOM" id="CLU_012820_5_1_1"/>
<dbReference type="InParanoid" id="Q8CHT1"/>
<dbReference type="OrthoDB" id="27593at2759"/>
<dbReference type="PhylomeDB" id="Q8CHT1"/>
<dbReference type="Reactome" id="R-MMU-193648">
    <property type="pathway name" value="NRAGE signals death through JNK"/>
</dbReference>
<dbReference type="Reactome" id="R-MMU-3928663">
    <property type="pathway name" value="EPHA-mediated growth cone collapse"/>
</dbReference>
<dbReference type="Reactome" id="R-MMU-416482">
    <property type="pathway name" value="G alpha (12/13) signalling events"/>
</dbReference>
<dbReference type="Reactome" id="R-MMU-8980692">
    <property type="pathway name" value="RHOA GTPase cycle"/>
</dbReference>
<dbReference type="Reactome" id="R-MMU-9013148">
    <property type="pathway name" value="CDC42 GTPase cycle"/>
</dbReference>
<dbReference type="Reactome" id="R-MMU-9013149">
    <property type="pathway name" value="RAC1 GTPase cycle"/>
</dbReference>
<dbReference type="BioGRID-ORCS" id="53972">
    <property type="hits" value="1 hit in 79 CRISPR screens"/>
</dbReference>
<dbReference type="CD-CODE" id="CE726F99">
    <property type="entry name" value="Postsynaptic density"/>
</dbReference>
<dbReference type="ChiTaRS" id="Ngef">
    <property type="organism name" value="mouse"/>
</dbReference>
<dbReference type="PRO" id="PR:Q8CHT1"/>
<dbReference type="Proteomes" id="UP000000589">
    <property type="component" value="Chromosome 1"/>
</dbReference>
<dbReference type="RNAct" id="Q8CHT1">
    <property type="molecule type" value="protein"/>
</dbReference>
<dbReference type="Bgee" id="ENSMUSG00000026259">
    <property type="expression patterns" value="Expressed in caudate-putamen and 152 other cell types or tissues"/>
</dbReference>
<dbReference type="ExpressionAtlas" id="Q8CHT1">
    <property type="expression patterns" value="baseline and differential"/>
</dbReference>
<dbReference type="GO" id="GO:0005829">
    <property type="term" value="C:cytosol"/>
    <property type="evidence" value="ECO:0000304"/>
    <property type="project" value="Reactome"/>
</dbReference>
<dbReference type="GO" id="GO:0098978">
    <property type="term" value="C:glutamatergic synapse"/>
    <property type="evidence" value="ECO:0000314"/>
    <property type="project" value="SynGO"/>
</dbReference>
<dbReference type="GO" id="GO:0030426">
    <property type="term" value="C:growth cone"/>
    <property type="evidence" value="ECO:0007669"/>
    <property type="project" value="UniProtKB-SubCell"/>
</dbReference>
<dbReference type="GO" id="GO:0016020">
    <property type="term" value="C:membrane"/>
    <property type="evidence" value="ECO:0007669"/>
    <property type="project" value="UniProtKB-SubCell"/>
</dbReference>
<dbReference type="GO" id="GO:0046875">
    <property type="term" value="F:ephrin receptor binding"/>
    <property type="evidence" value="ECO:0000353"/>
    <property type="project" value="UniProtKB"/>
</dbReference>
<dbReference type="GO" id="GO:0005085">
    <property type="term" value="F:guanyl-nucleotide exchange factor activity"/>
    <property type="evidence" value="ECO:0007669"/>
    <property type="project" value="UniProtKB-KW"/>
</dbReference>
<dbReference type="GO" id="GO:0030154">
    <property type="term" value="P:cell differentiation"/>
    <property type="evidence" value="ECO:0007669"/>
    <property type="project" value="UniProtKB-KW"/>
</dbReference>
<dbReference type="GO" id="GO:0048013">
    <property type="term" value="P:ephrin receptor signaling pathway"/>
    <property type="evidence" value="ECO:0000314"/>
    <property type="project" value="UniProtKB"/>
</dbReference>
<dbReference type="GO" id="GO:0061002">
    <property type="term" value="P:negative regulation of dendritic spine morphogenesis"/>
    <property type="evidence" value="ECO:0000314"/>
    <property type="project" value="UniProtKB"/>
</dbReference>
<dbReference type="GO" id="GO:0007399">
    <property type="term" value="P:nervous system development"/>
    <property type="evidence" value="ECO:0007669"/>
    <property type="project" value="UniProtKB-KW"/>
</dbReference>
<dbReference type="GO" id="GO:0043087">
    <property type="term" value="P:regulation of GTPase activity"/>
    <property type="evidence" value="ECO:0000314"/>
    <property type="project" value="UniProtKB"/>
</dbReference>
<dbReference type="GO" id="GO:1905806">
    <property type="term" value="P:regulation of synapse pruning"/>
    <property type="evidence" value="ECO:0000314"/>
    <property type="project" value="SynGO"/>
</dbReference>
<dbReference type="CDD" id="cd01221">
    <property type="entry name" value="PH_ephexin"/>
    <property type="match status" value="1"/>
</dbReference>
<dbReference type="CDD" id="cd00160">
    <property type="entry name" value="RhoGEF"/>
    <property type="match status" value="1"/>
</dbReference>
<dbReference type="CDD" id="cd11939">
    <property type="entry name" value="SH3_ephexin1"/>
    <property type="match status" value="1"/>
</dbReference>
<dbReference type="FunFam" id="2.30.30.40:FF:000123">
    <property type="entry name" value="Ephexin-1 isoform X1"/>
    <property type="match status" value="1"/>
</dbReference>
<dbReference type="FunFam" id="2.30.29.30:FF:000127">
    <property type="entry name" value="Neuronal guanine nucleotide exchange factor"/>
    <property type="match status" value="1"/>
</dbReference>
<dbReference type="FunFam" id="1.20.900.10:FF:000007">
    <property type="entry name" value="rho guanine nucleotide exchange factor 19"/>
    <property type="match status" value="1"/>
</dbReference>
<dbReference type="Gene3D" id="1.20.900.10">
    <property type="entry name" value="Dbl homology (DH) domain"/>
    <property type="match status" value="1"/>
</dbReference>
<dbReference type="Gene3D" id="2.30.29.30">
    <property type="entry name" value="Pleckstrin-homology domain (PH domain)/Phosphotyrosine-binding domain (PTB)"/>
    <property type="match status" value="1"/>
</dbReference>
<dbReference type="Gene3D" id="2.30.30.40">
    <property type="entry name" value="SH3 Domains"/>
    <property type="match status" value="1"/>
</dbReference>
<dbReference type="InterPro" id="IPR035899">
    <property type="entry name" value="DBL_dom_sf"/>
</dbReference>
<dbReference type="InterPro" id="IPR000219">
    <property type="entry name" value="DH_dom"/>
</dbReference>
<dbReference type="InterPro" id="IPR035635">
    <property type="entry name" value="Ephexin-1_SH3"/>
</dbReference>
<dbReference type="InterPro" id="IPR047271">
    <property type="entry name" value="Ephexin-like"/>
</dbReference>
<dbReference type="InterPro" id="IPR011993">
    <property type="entry name" value="PH-like_dom_sf"/>
</dbReference>
<dbReference type="InterPro" id="IPR001849">
    <property type="entry name" value="PH_domain"/>
</dbReference>
<dbReference type="InterPro" id="IPR047270">
    <property type="entry name" value="PH_ephexin"/>
</dbReference>
<dbReference type="InterPro" id="IPR036028">
    <property type="entry name" value="SH3-like_dom_sf"/>
</dbReference>
<dbReference type="InterPro" id="IPR001452">
    <property type="entry name" value="SH3_domain"/>
</dbReference>
<dbReference type="InterPro" id="IPR055251">
    <property type="entry name" value="SOS1_NGEF_PH"/>
</dbReference>
<dbReference type="PANTHER" id="PTHR12845:SF8">
    <property type="entry name" value="EPHEXIN-1"/>
    <property type="match status" value="1"/>
</dbReference>
<dbReference type="PANTHER" id="PTHR12845">
    <property type="entry name" value="GUANINE NUCLEOTIDE EXCHANGE FACTOR"/>
    <property type="match status" value="1"/>
</dbReference>
<dbReference type="Pfam" id="PF00621">
    <property type="entry name" value="RhoGEF"/>
    <property type="match status" value="1"/>
</dbReference>
<dbReference type="Pfam" id="PF00018">
    <property type="entry name" value="SH3_1"/>
    <property type="match status" value="1"/>
</dbReference>
<dbReference type="Pfam" id="PF22697">
    <property type="entry name" value="SOS1_NGEF_PH"/>
    <property type="match status" value="1"/>
</dbReference>
<dbReference type="SMART" id="SM00233">
    <property type="entry name" value="PH"/>
    <property type="match status" value="1"/>
</dbReference>
<dbReference type="SMART" id="SM00325">
    <property type="entry name" value="RhoGEF"/>
    <property type="match status" value="1"/>
</dbReference>
<dbReference type="SMART" id="SM00326">
    <property type="entry name" value="SH3"/>
    <property type="match status" value="1"/>
</dbReference>
<dbReference type="SUPFAM" id="SSF48065">
    <property type="entry name" value="DBL homology domain (DH-domain)"/>
    <property type="match status" value="1"/>
</dbReference>
<dbReference type="SUPFAM" id="SSF50729">
    <property type="entry name" value="PH domain-like"/>
    <property type="match status" value="1"/>
</dbReference>
<dbReference type="SUPFAM" id="SSF50044">
    <property type="entry name" value="SH3-domain"/>
    <property type="match status" value="1"/>
</dbReference>
<dbReference type="PROSITE" id="PS50010">
    <property type="entry name" value="DH_2"/>
    <property type="match status" value="1"/>
</dbReference>
<dbReference type="PROSITE" id="PS50003">
    <property type="entry name" value="PH_DOMAIN"/>
    <property type="match status" value="1"/>
</dbReference>
<dbReference type="PROSITE" id="PS50002">
    <property type="entry name" value="SH3"/>
    <property type="match status" value="1"/>
</dbReference>
<evidence type="ECO:0000250" key="1"/>
<evidence type="ECO:0000250" key="2">
    <source>
        <dbReference type="UniProtKB" id="Q5BKC9"/>
    </source>
</evidence>
<evidence type="ECO:0000255" key="3">
    <source>
        <dbReference type="PROSITE-ProRule" id="PRU00062"/>
    </source>
</evidence>
<evidence type="ECO:0000255" key="4">
    <source>
        <dbReference type="PROSITE-ProRule" id="PRU00145"/>
    </source>
</evidence>
<evidence type="ECO:0000255" key="5">
    <source>
        <dbReference type="PROSITE-ProRule" id="PRU00192"/>
    </source>
</evidence>
<evidence type="ECO:0000256" key="6">
    <source>
        <dbReference type="SAM" id="MobiDB-lite"/>
    </source>
</evidence>
<evidence type="ECO:0000269" key="7">
    <source>
    </source>
</evidence>
<evidence type="ECO:0000269" key="8">
    <source>
    </source>
</evidence>
<evidence type="ECO:0000269" key="9">
    <source>
    </source>
</evidence>
<evidence type="ECO:0000269" key="10">
    <source>
    </source>
</evidence>
<evidence type="ECO:0000269" key="11">
    <source>
    </source>
</evidence>
<evidence type="ECO:0000269" key="12">
    <source>
    </source>
</evidence>
<evidence type="ECO:0000303" key="13">
    <source>
    </source>
</evidence>
<evidence type="ECO:0000303" key="14">
    <source>
    </source>
</evidence>
<evidence type="ECO:0000305" key="15"/>
<name>NGEF_MOUSE</name>
<sequence>METKNSEDWGKPQRKSESSSRKSNHGPAEMRPALPPENREAPETGEETQNEEPRRLIPIQRHSLFNRAVRHRHKARSTSERRASDQADLPKMGKSVNERSAFNLPQGRLSPWRTPAQRDTGAQEASESSSTPGNGTTPEECPALTDSPTTLTEALQMIHPIPADSWRNLIEQIGLLYQEYRDKSTLQEIETRRQQDAEIQGNSDGSQVGEDAGEEEEEEEEGEEEELASPPERRALPQICLLSNPHSRFNLWQDLPEIQSSGVLDILQPEEIRLQEAMFELVTSEASYYKSLNLLVSHFMENERLKKILHPSEAHILFSNVLDVMAVSERFLLELEHRMEENIVISDVCDIVYRYAADHFSVYITYVSNQTYQERTYKQLLQEKAAFRELIAQLELDPKCKGLPFSSFLILPFQRITRLKLLVQNILKRVEERSEREGTALDAHKELEMVVKACNEGVRKMSRTEQMISIQKKMEFKIKSVPIISHSRWLLKQGELQQMSGPKTSRTLRTKKLFREIYLFLFNDLLVICRQIPGDKYQVFDSAPRGLLRVEELEDQGQTLANVFILRLLENADDREATYMLKASSQSEMKRWMTSLAPNRRTKFVSFTSRLLDCPQVQCVHPYVAQQPDELTLELADILNILEKTEDGWIFGERLHDQERGWFPSSMTEEILNPKIRSQNLKECFRVHKMEDPQRSQNKDRRKLGSRNRQ</sequence>
<comment type="function">
    <text evidence="8 11 12">Acts as a guanine nucleotide exchange factor (GEF) which differentially activates the GTPases RHOA, RAC1 and CDC42. Plays a role in axon guidance regulating ephrin-induced growth cone collapse and dendritic spine morphogenesis. Upon activation by ephrin through EPHA4, the GEF activity switches toward RHOA resulting in its activation. Activated RHOA promotes cone retraction at the expense of RAC1- and CDC42-stimulated growth cone extension.</text>
</comment>
<comment type="subunit">
    <text evidence="8 12">Interacts with CDK5R1 and EPHA4; activated by EPHA4 through the CDK5 kinase.</text>
</comment>
<comment type="subcellular location">
    <subcellularLocation>
        <location evidence="1">Cytoplasm</location>
    </subcellularLocation>
    <subcellularLocation>
        <location evidence="1">Membrane</location>
    </subcellularLocation>
    <subcellularLocation>
        <location evidence="1">Cell projection</location>
        <location evidence="1">Growth cone</location>
    </subcellularLocation>
    <text evidence="1">Associated with membranes. Localizes to axonal growth cones (By similarity).</text>
</comment>
<comment type="alternative products">
    <event type="alternative splicing"/>
    <isoform>
        <id>Q8CHT1-1</id>
        <name>1</name>
        <sequence type="displayed"/>
    </isoform>
    <isoform>
        <id>Q8CHT1-2</id>
        <name>2</name>
        <sequence type="described" ref="VSP_020262 VSP_020263"/>
    </isoform>
</comment>
<comment type="tissue specificity">
    <text evidence="7">Highly expressed in brain and to a lower extent in eye.</text>
</comment>
<comment type="developmental stage">
    <text evidence="7 9">Highly expressed in 7 dpc and to a lower extent in 11 dpc, 15 dpc and 17 dpc embryos. Expressed at 16.5 dpc in the lateral regions of the cortex.</text>
</comment>
<comment type="domain">
    <text>The DH domain and the PH domain are both required to mediate interaction with EPHA4.</text>
</comment>
<comment type="PTM">
    <text evidence="10 12">Src-dependent phosphorylation at Tyr-177 upon EPHA4 activation increases the guanine exchange factor activity toward RHOA. Phosphorylation by CDK5 upon EPHA4 activation by EFNA1 may regulate dendritic spine morphogenesis.</text>
</comment>
<comment type="sequence caution" evidence="15">
    <conflict type="erroneous initiation">
        <sequence resource="EMBL-CDS" id="AAH22680"/>
    </conflict>
</comment>
<comment type="sequence caution" evidence="15">
    <conflict type="frameshift">
        <sequence resource="EMBL-CDS" id="CAC00698"/>
    </conflict>
</comment>